<evidence type="ECO:0000250" key="1"/>
<evidence type="ECO:0000255" key="2">
    <source>
        <dbReference type="PROSITE-ProRule" id="PRU00169"/>
    </source>
</evidence>
<evidence type="ECO:0000255" key="3">
    <source>
        <dbReference type="PROSITE-ProRule" id="PRU00411"/>
    </source>
</evidence>
<evidence type="ECO:0000305" key="4"/>
<dbReference type="EMBL" id="CP000253">
    <property type="protein sequence ID" value="ABD31683.1"/>
    <property type="status" value="ALT_INIT"/>
    <property type="molecule type" value="Genomic_DNA"/>
</dbReference>
<dbReference type="RefSeq" id="WP_000706315.1">
    <property type="nucleotide sequence ID" value="NZ_LS483365.1"/>
</dbReference>
<dbReference type="RefSeq" id="WP_001807612.1">
    <property type="nucleotide sequence ID" value="NC_007795.1"/>
</dbReference>
<dbReference type="RefSeq" id="YP_501137.1">
    <property type="nucleotide sequence ID" value="NC_007795.1"/>
</dbReference>
<dbReference type="SMR" id="Q2FVM7"/>
<dbReference type="STRING" id="93061.SAOUHSC_02675"/>
<dbReference type="PaxDb" id="1280-SAXN108_2646"/>
<dbReference type="GeneID" id="3921237"/>
<dbReference type="KEGG" id="sao:SAOUHSC_02675"/>
<dbReference type="PATRIC" id="fig|93061.5.peg.2422"/>
<dbReference type="eggNOG" id="COG2197">
    <property type="taxonomic scope" value="Bacteria"/>
</dbReference>
<dbReference type="HOGENOM" id="CLU_000445_90_1_9"/>
<dbReference type="OrthoDB" id="9780153at2"/>
<dbReference type="Proteomes" id="UP000008816">
    <property type="component" value="Chromosome"/>
</dbReference>
<dbReference type="GO" id="GO:0005737">
    <property type="term" value="C:cytoplasm"/>
    <property type="evidence" value="ECO:0007669"/>
    <property type="project" value="UniProtKB-SubCell"/>
</dbReference>
<dbReference type="GO" id="GO:0003677">
    <property type="term" value="F:DNA binding"/>
    <property type="evidence" value="ECO:0007669"/>
    <property type="project" value="UniProtKB-KW"/>
</dbReference>
<dbReference type="GO" id="GO:0000160">
    <property type="term" value="P:phosphorelay signal transduction system"/>
    <property type="evidence" value="ECO:0007669"/>
    <property type="project" value="UniProtKB-KW"/>
</dbReference>
<dbReference type="GO" id="GO:0006355">
    <property type="term" value="P:regulation of DNA-templated transcription"/>
    <property type="evidence" value="ECO:0007669"/>
    <property type="project" value="InterPro"/>
</dbReference>
<dbReference type="CDD" id="cd06170">
    <property type="entry name" value="LuxR_C_like"/>
    <property type="match status" value="1"/>
</dbReference>
<dbReference type="CDD" id="cd17535">
    <property type="entry name" value="REC_NarL-like"/>
    <property type="match status" value="1"/>
</dbReference>
<dbReference type="Gene3D" id="3.40.50.2300">
    <property type="match status" value="1"/>
</dbReference>
<dbReference type="InterPro" id="IPR011006">
    <property type="entry name" value="CheY-like_superfamily"/>
</dbReference>
<dbReference type="InterPro" id="IPR016032">
    <property type="entry name" value="Sig_transdc_resp-reg_C-effctor"/>
</dbReference>
<dbReference type="InterPro" id="IPR001789">
    <property type="entry name" value="Sig_transdc_resp-reg_receiver"/>
</dbReference>
<dbReference type="InterPro" id="IPR000792">
    <property type="entry name" value="Tscrpt_reg_LuxR_C"/>
</dbReference>
<dbReference type="InterPro" id="IPR039420">
    <property type="entry name" value="WalR-like"/>
</dbReference>
<dbReference type="PANTHER" id="PTHR43214:SF37">
    <property type="entry name" value="TRANSCRIPTIONAL REGULATORY PROTEIN YDFI"/>
    <property type="match status" value="1"/>
</dbReference>
<dbReference type="PANTHER" id="PTHR43214">
    <property type="entry name" value="TWO-COMPONENT RESPONSE REGULATOR"/>
    <property type="match status" value="1"/>
</dbReference>
<dbReference type="Pfam" id="PF00196">
    <property type="entry name" value="GerE"/>
    <property type="match status" value="1"/>
</dbReference>
<dbReference type="Pfam" id="PF00072">
    <property type="entry name" value="Response_reg"/>
    <property type="match status" value="1"/>
</dbReference>
<dbReference type="PRINTS" id="PR00038">
    <property type="entry name" value="HTHLUXR"/>
</dbReference>
<dbReference type="SMART" id="SM00421">
    <property type="entry name" value="HTH_LUXR"/>
    <property type="match status" value="1"/>
</dbReference>
<dbReference type="SMART" id="SM00448">
    <property type="entry name" value="REC"/>
    <property type="match status" value="1"/>
</dbReference>
<dbReference type="SUPFAM" id="SSF46894">
    <property type="entry name" value="C-terminal effector domain of the bipartite response regulators"/>
    <property type="match status" value="1"/>
</dbReference>
<dbReference type="SUPFAM" id="SSF52172">
    <property type="entry name" value="CheY-like"/>
    <property type="match status" value="1"/>
</dbReference>
<dbReference type="PROSITE" id="PS00622">
    <property type="entry name" value="HTH_LUXR_1"/>
    <property type="match status" value="1"/>
</dbReference>
<dbReference type="PROSITE" id="PS50043">
    <property type="entry name" value="HTH_LUXR_2"/>
    <property type="match status" value="1"/>
</dbReference>
<dbReference type="PROSITE" id="PS50110">
    <property type="entry name" value="RESPONSE_REGULATORY"/>
    <property type="match status" value="1"/>
</dbReference>
<organism>
    <name type="scientific">Staphylococcus aureus (strain NCTC 8325 / PS 47)</name>
    <dbReference type="NCBI Taxonomy" id="93061"/>
    <lineage>
        <taxon>Bacteria</taxon>
        <taxon>Bacillati</taxon>
        <taxon>Bacillota</taxon>
        <taxon>Bacilli</taxon>
        <taxon>Bacillales</taxon>
        <taxon>Staphylococcaceae</taxon>
        <taxon>Staphylococcus</taxon>
    </lineage>
</organism>
<name>NREC_STAA8</name>
<protein>
    <recommendedName>
        <fullName>Oxygen regulatory protein NreC</fullName>
    </recommendedName>
    <alternativeName>
        <fullName>Nitrogen regulation protein C</fullName>
    </alternativeName>
</protein>
<reference key="1">
    <citation type="book" date="2006" name="Gram positive pathogens, 2nd edition">
        <title>The Staphylococcus aureus NCTC 8325 genome.</title>
        <editorList>
            <person name="Fischetti V."/>
            <person name="Novick R."/>
            <person name="Ferretti J."/>
            <person name="Portnoy D."/>
            <person name="Rood J."/>
        </editorList>
        <authorList>
            <person name="Gillaspy A.F."/>
            <person name="Worrell V."/>
            <person name="Orvis J."/>
            <person name="Roe B.A."/>
            <person name="Dyer D.W."/>
            <person name="Iandolo J.J."/>
        </authorList>
    </citation>
    <scope>NUCLEOTIDE SEQUENCE [LARGE SCALE GENOMIC DNA]</scope>
    <source>
        <strain>NCTC 8325 / PS 47</strain>
    </source>
</reference>
<keyword id="KW-0010">Activator</keyword>
<keyword id="KW-0963">Cytoplasm</keyword>
<keyword id="KW-0238">DNA-binding</keyword>
<keyword id="KW-0597">Phosphoprotein</keyword>
<keyword id="KW-1185">Reference proteome</keyword>
<keyword id="KW-0804">Transcription</keyword>
<keyword id="KW-0805">Transcription regulation</keyword>
<keyword id="KW-0902">Two-component regulatory system</keyword>
<comment type="function">
    <text evidence="1">Member of the two-component regulatory system NreB/NreC involved in the control of dissimilatory nitrate/nitrite reduction in response to oxygen. Phosphorylated NreC binds to a GC-rich palindromic sequence at the promoters of the nitrate (narGHJI) and nitrite (nir) reductase operons, as well as the putative nitrate transporter gene narT, and activates their expression (By similarity).</text>
</comment>
<comment type="subcellular location">
    <subcellularLocation>
        <location evidence="4">Cytoplasm</location>
    </subcellularLocation>
</comment>
<comment type="PTM">
    <text evidence="1">Phosphorylated by NreB.</text>
</comment>
<comment type="sequence caution" evidence="4">
    <conflict type="erroneous initiation">
        <sequence resource="EMBL-CDS" id="ABD31683"/>
    </conflict>
</comment>
<accession>Q2FVM7</accession>
<feature type="chain" id="PRO_0000349352" description="Oxygen regulatory protein NreC">
    <location>
        <begin position="1"/>
        <end position="217"/>
    </location>
</feature>
<feature type="domain" description="Response regulatory" evidence="2">
    <location>
        <begin position="2"/>
        <end position="119"/>
    </location>
</feature>
<feature type="domain" description="HTH luxR-type" evidence="3">
    <location>
        <begin position="148"/>
        <end position="213"/>
    </location>
</feature>
<feature type="DNA-binding region" description="H-T-H motif" evidence="3">
    <location>
        <begin position="172"/>
        <end position="191"/>
    </location>
</feature>
<feature type="modified residue" description="4-aspartylphosphate" evidence="2">
    <location>
        <position position="53"/>
    </location>
</feature>
<sequence length="217" mass="24368">MKIVIADDHAVVRTGFSMILNYQNDMEVVATAADGVEAYQKVMEYKPDVLLMDLSMPPGESGLIATSKIADSFPETKILILTMFDDEEYLFHVLRNGAKGYILKNAPDEQLLLAIRTVYKGETYVDMKLTTSLVNEFVSNSNQDTANTTDPFKILSKRELEILPLIAKGYGNKEIAEKLFVSVKTVEAHKTHIMTKLGLKSKPELVEYALKKKLLEF</sequence>
<proteinExistence type="inferred from homology"/>
<gene>
    <name type="primary">nreC</name>
    <name type="ordered locus">SAOUHSC_02675</name>
</gene>